<accession>Q9CEV7</accession>
<name>PEPF_LACLA</name>
<evidence type="ECO:0000250" key="1"/>
<evidence type="ECO:0000255" key="2">
    <source>
        <dbReference type="PROSITE-ProRule" id="PRU10095"/>
    </source>
</evidence>
<evidence type="ECO:0000305" key="3"/>
<reference key="1">
    <citation type="journal article" date="2001" name="Genome Res.">
        <title>The complete genome sequence of the lactic acid bacterium Lactococcus lactis ssp. lactis IL1403.</title>
        <authorList>
            <person name="Bolotin A."/>
            <person name="Wincker P."/>
            <person name="Mauger S."/>
            <person name="Jaillon O."/>
            <person name="Malarme K."/>
            <person name="Weissenbach J."/>
            <person name="Ehrlich S.D."/>
            <person name="Sorokin A."/>
        </authorList>
    </citation>
    <scope>NUCLEOTIDE SEQUENCE [LARGE SCALE GENOMIC DNA]</scope>
    <source>
        <strain>IL1403</strain>
    </source>
</reference>
<protein>
    <recommendedName>
        <fullName>Oligoendopeptidase F homolog</fullName>
        <ecNumber>3.4.24.-</ecNumber>
    </recommendedName>
</protein>
<comment type="function">
    <text evidence="1">Hydrolyzes peptides containing between 7 and 17 amino acids with a rather wide specificity.</text>
</comment>
<comment type="cofactor">
    <cofactor evidence="1">
        <name>Zn(2+)</name>
        <dbReference type="ChEBI" id="CHEBI:29105"/>
    </cofactor>
    <text evidence="1">Binds 1 zinc ion.</text>
</comment>
<comment type="similarity">
    <text evidence="3">Belongs to the peptidase M3 family.</text>
</comment>
<proteinExistence type="inferred from homology"/>
<sequence>MAKNRNEITEKLTWDLTTIYKTDKEWEAELTRIKSELSLVEETDPGHLLDSAESLLTITEKMLSISQQVEKLYVYASMKNDQDTREAKYQEYQSKATALYVKFGEVYAFYEPEFLKISKEVYNKWLGELQKLKNYDHMFERLFAKKAHILSQKEEKLLAAAGEIFESPSETFEIFDNADIKLPMVKNESDEMIQLTHGNYSSLMESKNRGVRKAAYKALYSNYEQYQHTYAKTLQTNVKVHNLKAQIRSYDSARQAALANNFVPEKVYDVLMEAIHQHLPLLHRYIELRKKILGITDLKMYDIYTPLSNLDYKFNYEDGVKKAEEVLAIFGKEYKGKVKAAFEQRWIDVEENIGKRSGAYSGGSYDTNAFMLLNWQETLDDLFTLVHEMGHSMHSAFTRENQPYVYGDYPIFLAEIASTTNENILTETLLKESKDDKERFALLNHWLDSFRGTVFRQSQFAEFEQKIHEADAAGEVLTSEYLNSLYGEINEKYYNLAAKENPEIQYEWARIPHFYYNFYVFQYATGFAAATFLAEKVVHGSTEDRQKYLEYLKAGSSAYPLEVIAKAGVDMESTDYLDAAFELFENRLSELEKLVEKGVHL</sequence>
<keyword id="KW-0378">Hydrolase</keyword>
<keyword id="KW-0479">Metal-binding</keyword>
<keyword id="KW-0482">Metalloprotease</keyword>
<keyword id="KW-0645">Protease</keyword>
<keyword id="KW-1185">Reference proteome</keyword>
<keyword id="KW-0862">Zinc</keyword>
<organism>
    <name type="scientific">Lactococcus lactis subsp. lactis (strain IL1403)</name>
    <name type="common">Streptococcus lactis</name>
    <dbReference type="NCBI Taxonomy" id="272623"/>
    <lineage>
        <taxon>Bacteria</taxon>
        <taxon>Bacillati</taxon>
        <taxon>Bacillota</taxon>
        <taxon>Bacilli</taxon>
        <taxon>Lactobacillales</taxon>
        <taxon>Streptococcaceae</taxon>
        <taxon>Lactococcus</taxon>
    </lineage>
</organism>
<feature type="chain" id="PRO_0000078162" description="Oligoendopeptidase F homolog">
    <location>
        <begin position="1"/>
        <end position="601"/>
    </location>
</feature>
<feature type="active site" evidence="2">
    <location>
        <position position="388"/>
    </location>
</feature>
<feature type="binding site" evidence="2">
    <location>
        <position position="387"/>
    </location>
    <ligand>
        <name>Zn(2+)</name>
        <dbReference type="ChEBI" id="CHEBI:29105"/>
        <note>catalytic</note>
    </ligand>
</feature>
<feature type="binding site" evidence="2">
    <location>
        <position position="391"/>
    </location>
    <ligand>
        <name>Zn(2+)</name>
        <dbReference type="ChEBI" id="CHEBI:29105"/>
        <note>catalytic</note>
    </ligand>
</feature>
<feature type="binding site" evidence="2">
    <location>
        <position position="394"/>
    </location>
    <ligand>
        <name>Zn(2+)</name>
        <dbReference type="ChEBI" id="CHEBI:29105"/>
        <note>catalytic</note>
    </ligand>
</feature>
<gene>
    <name type="primary">pepF</name>
    <name type="ordered locus">LL1727</name>
    <name type="ORF">L166370</name>
</gene>
<dbReference type="EC" id="3.4.24.-"/>
<dbReference type="EMBL" id="AE005176">
    <property type="protein sequence ID" value="AAK05825.1"/>
    <property type="molecule type" value="Genomic_DNA"/>
</dbReference>
<dbReference type="PIR" id="G86840">
    <property type="entry name" value="G86840"/>
</dbReference>
<dbReference type="RefSeq" id="NP_267883.1">
    <property type="nucleotide sequence ID" value="NC_002662.1"/>
</dbReference>
<dbReference type="RefSeq" id="WP_010906109.1">
    <property type="nucleotide sequence ID" value="NC_002662.1"/>
</dbReference>
<dbReference type="SMR" id="Q9CEV7"/>
<dbReference type="MEROPS" id="M03.007"/>
<dbReference type="PaxDb" id="272623-L166370"/>
<dbReference type="EnsemblBacteria" id="AAK05825">
    <property type="protein sequence ID" value="AAK05825"/>
    <property type="gene ID" value="L166370"/>
</dbReference>
<dbReference type="KEGG" id="lla:L166370"/>
<dbReference type="PATRIC" id="fig|272623.7.peg.1852"/>
<dbReference type="eggNOG" id="COG1164">
    <property type="taxonomic scope" value="Bacteria"/>
</dbReference>
<dbReference type="HOGENOM" id="CLU_021290_2_0_9"/>
<dbReference type="OrthoDB" id="9766487at2"/>
<dbReference type="Proteomes" id="UP000002196">
    <property type="component" value="Chromosome"/>
</dbReference>
<dbReference type="GO" id="GO:0046872">
    <property type="term" value="F:metal ion binding"/>
    <property type="evidence" value="ECO:0007669"/>
    <property type="project" value="UniProtKB-KW"/>
</dbReference>
<dbReference type="GO" id="GO:0004222">
    <property type="term" value="F:metalloendopeptidase activity"/>
    <property type="evidence" value="ECO:0007669"/>
    <property type="project" value="InterPro"/>
</dbReference>
<dbReference type="GO" id="GO:0006518">
    <property type="term" value="P:peptide metabolic process"/>
    <property type="evidence" value="ECO:0007669"/>
    <property type="project" value="TreeGrafter"/>
</dbReference>
<dbReference type="GO" id="GO:0006508">
    <property type="term" value="P:proteolysis"/>
    <property type="evidence" value="ECO:0007669"/>
    <property type="project" value="UniProtKB-KW"/>
</dbReference>
<dbReference type="CDD" id="cd09608">
    <property type="entry name" value="M3B_PepF"/>
    <property type="match status" value="1"/>
</dbReference>
<dbReference type="Gene3D" id="1.10.1370.20">
    <property type="entry name" value="Oligoendopeptidase f, C-terminal domain"/>
    <property type="match status" value="1"/>
</dbReference>
<dbReference type="Gene3D" id="1.20.140.70">
    <property type="entry name" value="Oligopeptidase f, N-terminal domain"/>
    <property type="match status" value="1"/>
</dbReference>
<dbReference type="Gene3D" id="1.10.287.830">
    <property type="entry name" value="putative peptidase helix hairpin domain like"/>
    <property type="match status" value="1"/>
</dbReference>
<dbReference type="InterPro" id="IPR013647">
    <property type="entry name" value="OligopepF_N_dom"/>
</dbReference>
<dbReference type="InterPro" id="IPR042088">
    <property type="entry name" value="OligoPept_F_C"/>
</dbReference>
<dbReference type="InterPro" id="IPR045090">
    <property type="entry name" value="Pept_M3A_M3B"/>
</dbReference>
<dbReference type="InterPro" id="IPR001567">
    <property type="entry name" value="Pept_M3A_M3B_dom"/>
</dbReference>
<dbReference type="InterPro" id="IPR004438">
    <property type="entry name" value="Peptidase_M3B"/>
</dbReference>
<dbReference type="NCBIfam" id="TIGR00181">
    <property type="entry name" value="pepF"/>
    <property type="match status" value="1"/>
</dbReference>
<dbReference type="PANTHER" id="PTHR11804">
    <property type="entry name" value="PROTEASE M3 THIMET OLIGOPEPTIDASE-RELATED"/>
    <property type="match status" value="1"/>
</dbReference>
<dbReference type="PANTHER" id="PTHR11804:SF84">
    <property type="entry name" value="SACCHAROLYSIN"/>
    <property type="match status" value="1"/>
</dbReference>
<dbReference type="Pfam" id="PF01432">
    <property type="entry name" value="Peptidase_M3"/>
    <property type="match status" value="1"/>
</dbReference>
<dbReference type="Pfam" id="PF08439">
    <property type="entry name" value="Peptidase_M3_N"/>
    <property type="match status" value="1"/>
</dbReference>
<dbReference type="SUPFAM" id="SSF55486">
    <property type="entry name" value="Metalloproteases ('zincins'), catalytic domain"/>
    <property type="match status" value="1"/>
</dbReference>
<dbReference type="PROSITE" id="PS00142">
    <property type="entry name" value="ZINC_PROTEASE"/>
    <property type="match status" value="1"/>
</dbReference>